<accession>B7MZ94</accession>
<protein>
    <recommendedName>
        <fullName evidence="1">Flap endonuclease Xni</fullName>
        <shortName evidence="1">FEN</shortName>
        <ecNumber evidence="1">3.1.-.-</ecNumber>
    </recommendedName>
</protein>
<dbReference type="EC" id="3.1.-.-" evidence="1"/>
<dbReference type="EMBL" id="CU928162">
    <property type="protein sequence ID" value="CAR09411.2"/>
    <property type="status" value="ALT_INIT"/>
    <property type="molecule type" value="Genomic_DNA"/>
</dbReference>
<dbReference type="RefSeq" id="WP_001314086.1">
    <property type="nucleotide sequence ID" value="NC_011745.1"/>
</dbReference>
<dbReference type="SMR" id="B7MZ94"/>
<dbReference type="KEGG" id="ecq:ECED1_3251"/>
<dbReference type="HOGENOM" id="CLU_004675_1_2_6"/>
<dbReference type="Proteomes" id="UP000000748">
    <property type="component" value="Chromosome"/>
</dbReference>
<dbReference type="GO" id="GO:0008409">
    <property type="term" value="F:5'-3' exonuclease activity"/>
    <property type="evidence" value="ECO:0007669"/>
    <property type="project" value="InterPro"/>
</dbReference>
<dbReference type="GO" id="GO:0017108">
    <property type="term" value="F:5'-flap endonuclease activity"/>
    <property type="evidence" value="ECO:0007669"/>
    <property type="project" value="UniProtKB-UniRule"/>
</dbReference>
<dbReference type="GO" id="GO:0003677">
    <property type="term" value="F:DNA binding"/>
    <property type="evidence" value="ECO:0007669"/>
    <property type="project" value="UniProtKB-UniRule"/>
</dbReference>
<dbReference type="GO" id="GO:0000287">
    <property type="term" value="F:magnesium ion binding"/>
    <property type="evidence" value="ECO:0007669"/>
    <property type="project" value="UniProtKB-UniRule"/>
</dbReference>
<dbReference type="GO" id="GO:0030955">
    <property type="term" value="F:potassium ion binding"/>
    <property type="evidence" value="ECO:0007669"/>
    <property type="project" value="UniProtKB-UniRule"/>
</dbReference>
<dbReference type="GO" id="GO:0033567">
    <property type="term" value="P:DNA replication, Okazaki fragment processing"/>
    <property type="evidence" value="ECO:0007669"/>
    <property type="project" value="UniProtKB-UniRule"/>
</dbReference>
<dbReference type="CDD" id="cd09898">
    <property type="entry name" value="H3TH_53EXO"/>
    <property type="match status" value="1"/>
</dbReference>
<dbReference type="CDD" id="cd09859">
    <property type="entry name" value="PIN_53EXO"/>
    <property type="match status" value="1"/>
</dbReference>
<dbReference type="FunFam" id="1.10.150.20:FF:000003">
    <property type="entry name" value="DNA polymerase I"/>
    <property type="match status" value="1"/>
</dbReference>
<dbReference type="FunFam" id="3.40.50.1010:FF:000011">
    <property type="entry name" value="Flap endonuclease Xni"/>
    <property type="match status" value="1"/>
</dbReference>
<dbReference type="Gene3D" id="1.10.150.20">
    <property type="entry name" value="5' to 3' exonuclease, C-terminal subdomain"/>
    <property type="match status" value="1"/>
</dbReference>
<dbReference type="Gene3D" id="3.40.50.1010">
    <property type="entry name" value="5'-nuclease"/>
    <property type="match status" value="1"/>
</dbReference>
<dbReference type="HAMAP" id="MF_01192">
    <property type="entry name" value="Xni"/>
    <property type="match status" value="1"/>
</dbReference>
<dbReference type="InterPro" id="IPR020046">
    <property type="entry name" value="5-3_exonucl_a-hlix_arch_N"/>
</dbReference>
<dbReference type="InterPro" id="IPR002421">
    <property type="entry name" value="5-3_exonuclease"/>
</dbReference>
<dbReference type="InterPro" id="IPR036279">
    <property type="entry name" value="5-3_exonuclease_C_sf"/>
</dbReference>
<dbReference type="InterPro" id="IPR020045">
    <property type="entry name" value="DNA_polI_H3TH"/>
</dbReference>
<dbReference type="InterPro" id="IPR038969">
    <property type="entry name" value="FEN"/>
</dbReference>
<dbReference type="InterPro" id="IPR008918">
    <property type="entry name" value="HhH2"/>
</dbReference>
<dbReference type="InterPro" id="IPR029060">
    <property type="entry name" value="PIN-like_dom_sf"/>
</dbReference>
<dbReference type="InterPro" id="IPR022895">
    <property type="entry name" value="Xni"/>
</dbReference>
<dbReference type="NCBIfam" id="NF007017">
    <property type="entry name" value="PRK09482.1"/>
    <property type="match status" value="1"/>
</dbReference>
<dbReference type="PANTHER" id="PTHR42646:SF2">
    <property type="entry name" value="5'-3' EXONUCLEASE FAMILY PROTEIN"/>
    <property type="match status" value="1"/>
</dbReference>
<dbReference type="PANTHER" id="PTHR42646">
    <property type="entry name" value="FLAP ENDONUCLEASE XNI"/>
    <property type="match status" value="1"/>
</dbReference>
<dbReference type="Pfam" id="PF01367">
    <property type="entry name" value="5_3_exonuc"/>
    <property type="match status" value="1"/>
</dbReference>
<dbReference type="Pfam" id="PF02739">
    <property type="entry name" value="5_3_exonuc_N"/>
    <property type="match status" value="1"/>
</dbReference>
<dbReference type="SMART" id="SM00475">
    <property type="entry name" value="53EXOc"/>
    <property type="match status" value="1"/>
</dbReference>
<dbReference type="SMART" id="SM00279">
    <property type="entry name" value="HhH2"/>
    <property type="match status" value="1"/>
</dbReference>
<dbReference type="SUPFAM" id="SSF47807">
    <property type="entry name" value="5' to 3' exonuclease, C-terminal subdomain"/>
    <property type="match status" value="1"/>
</dbReference>
<dbReference type="SUPFAM" id="SSF88723">
    <property type="entry name" value="PIN domain-like"/>
    <property type="match status" value="1"/>
</dbReference>
<reference key="1">
    <citation type="journal article" date="2009" name="PLoS Genet.">
        <title>Organised genome dynamics in the Escherichia coli species results in highly diverse adaptive paths.</title>
        <authorList>
            <person name="Touchon M."/>
            <person name="Hoede C."/>
            <person name="Tenaillon O."/>
            <person name="Barbe V."/>
            <person name="Baeriswyl S."/>
            <person name="Bidet P."/>
            <person name="Bingen E."/>
            <person name="Bonacorsi S."/>
            <person name="Bouchier C."/>
            <person name="Bouvet O."/>
            <person name="Calteau A."/>
            <person name="Chiapello H."/>
            <person name="Clermont O."/>
            <person name="Cruveiller S."/>
            <person name="Danchin A."/>
            <person name="Diard M."/>
            <person name="Dossat C."/>
            <person name="Karoui M.E."/>
            <person name="Frapy E."/>
            <person name="Garry L."/>
            <person name="Ghigo J.M."/>
            <person name="Gilles A.M."/>
            <person name="Johnson J."/>
            <person name="Le Bouguenec C."/>
            <person name="Lescat M."/>
            <person name="Mangenot S."/>
            <person name="Martinez-Jehanne V."/>
            <person name="Matic I."/>
            <person name="Nassif X."/>
            <person name="Oztas S."/>
            <person name="Petit M.A."/>
            <person name="Pichon C."/>
            <person name="Rouy Z."/>
            <person name="Ruf C.S."/>
            <person name="Schneider D."/>
            <person name="Tourret J."/>
            <person name="Vacherie B."/>
            <person name="Vallenet D."/>
            <person name="Medigue C."/>
            <person name="Rocha E.P.C."/>
            <person name="Denamur E."/>
        </authorList>
    </citation>
    <scope>NUCLEOTIDE SEQUENCE [LARGE SCALE GENOMIC DNA]</scope>
    <source>
        <strain>ED1a</strain>
    </source>
</reference>
<name>XNI_ECO81</name>
<proteinExistence type="inferred from homology"/>
<sequence>MAVHLLIVDALNLIRRIHAVQGSPCVETCQHALDQLIMHSQPTHAVAVFDDENRSSGWRHQRLPDYKAGRPPMPEELHNEMPALRAAFEQRGVPCWSASGNEADDLAATLAVKVTQAGHQATIVSTDKGYCQLLSPTLRIRDYFQKRWLDAPFIDKEFGVQPQQLPDYWGLAGISSSKVPGVAGIGPKSATQLLVEFQSLEGIYENLDAVAEKWRKKLETHKEMAFLCRDIARLQTDMHIDGNLQQLRLVR</sequence>
<keyword id="KW-0238">DNA-binding</keyword>
<keyword id="KW-0255">Endonuclease</keyword>
<keyword id="KW-0378">Hydrolase</keyword>
<keyword id="KW-0460">Magnesium</keyword>
<keyword id="KW-0479">Metal-binding</keyword>
<keyword id="KW-0540">Nuclease</keyword>
<keyword id="KW-0630">Potassium</keyword>
<comment type="function">
    <text evidence="1">Has flap endonuclease activity. During DNA replication, flap endonucleases cleave the 5'-overhanging flap structure that is generated by displacement synthesis when DNA polymerase encounters the 5'-end of a downstream Okazaki fragment.</text>
</comment>
<comment type="cofactor">
    <cofactor evidence="1">
        <name>Mg(2+)</name>
        <dbReference type="ChEBI" id="CHEBI:18420"/>
    </cofactor>
    <text evidence="1">Binds 2 Mg(2+) per subunit. Only one magnesium ion has a direct interaction with the protein, the other interactions are indirect.</text>
</comment>
<comment type="cofactor">
    <cofactor evidence="1">
        <name>K(+)</name>
        <dbReference type="ChEBI" id="CHEBI:29103"/>
    </cofactor>
    <text evidence="1">Binds 1 K(+) per subunit. The potassium ion strongly increases the affinity for DNA.</text>
</comment>
<comment type="similarity">
    <text evidence="1">Belongs to the Xni family.</text>
</comment>
<comment type="sequence caution" evidence="2">
    <conflict type="erroneous initiation">
        <sequence resource="EMBL-CDS" id="CAR09411"/>
    </conflict>
    <text>Extended N-terminus.</text>
</comment>
<organism>
    <name type="scientific">Escherichia coli O81 (strain ED1a)</name>
    <dbReference type="NCBI Taxonomy" id="585397"/>
    <lineage>
        <taxon>Bacteria</taxon>
        <taxon>Pseudomonadati</taxon>
        <taxon>Pseudomonadota</taxon>
        <taxon>Gammaproteobacteria</taxon>
        <taxon>Enterobacterales</taxon>
        <taxon>Enterobacteriaceae</taxon>
        <taxon>Escherichia</taxon>
    </lineage>
</organism>
<feature type="chain" id="PRO_1000164502" description="Flap endonuclease Xni">
    <location>
        <begin position="1"/>
        <end position="251"/>
    </location>
</feature>
<feature type="domain" description="5'-3' exonuclease" evidence="1">
    <location>
        <begin position="160"/>
        <end position="249"/>
    </location>
</feature>
<feature type="region of interest" description="Interaction with DNA" evidence="1">
    <location>
        <begin position="184"/>
        <end position="189"/>
    </location>
</feature>
<feature type="binding site" evidence="1">
    <location>
        <position position="104"/>
    </location>
    <ligand>
        <name>Mg(2+)</name>
        <dbReference type="ChEBI" id="CHEBI:18420"/>
    </ligand>
</feature>
<feature type="binding site" evidence="1">
    <location>
        <position position="171"/>
    </location>
    <ligand>
        <name>K(+)</name>
        <dbReference type="ChEBI" id="CHEBI:29103"/>
    </ligand>
</feature>
<feature type="binding site" evidence="1">
    <location>
        <position position="172"/>
    </location>
    <ligand>
        <name>K(+)</name>
        <dbReference type="ChEBI" id="CHEBI:29103"/>
    </ligand>
</feature>
<feature type="binding site" evidence="1">
    <location>
        <position position="180"/>
    </location>
    <ligand>
        <name>K(+)</name>
        <dbReference type="ChEBI" id="CHEBI:29103"/>
    </ligand>
</feature>
<feature type="binding site" evidence="1">
    <location>
        <position position="182"/>
    </location>
    <ligand>
        <name>K(+)</name>
        <dbReference type="ChEBI" id="CHEBI:29103"/>
    </ligand>
</feature>
<feature type="binding site" evidence="1">
    <location>
        <position position="185"/>
    </location>
    <ligand>
        <name>K(+)</name>
        <dbReference type="ChEBI" id="CHEBI:29103"/>
    </ligand>
</feature>
<evidence type="ECO:0000255" key="1">
    <source>
        <dbReference type="HAMAP-Rule" id="MF_01192"/>
    </source>
</evidence>
<evidence type="ECO:0000305" key="2"/>
<gene>
    <name evidence="1" type="primary">xni</name>
    <name evidence="1" type="synonym">ygdG</name>
    <name type="ordered locus">ECED1_3251</name>
</gene>